<proteinExistence type="evidence at protein level"/>
<reference key="1">
    <citation type="journal article" date="2000" name="Biochim. Biophys. Acta">
        <title>Identification of a novel platelet-derived growth factor-like gene, fallotein, in the human reproductive tract.</title>
        <authorList>
            <person name="Tsai Y.J."/>
            <person name="Lee R.K."/>
            <person name="Lin S.P."/>
            <person name="Chen Y.H."/>
        </authorList>
    </citation>
    <scope>NUCLEOTIDE SEQUENCE [MRNA] (ISOFORM 1)</scope>
    <scope>TISSUE SPECIFICITY</scope>
    <source>
        <tissue>Uterus</tissue>
    </source>
</reference>
<reference key="2">
    <citation type="journal article" date="2000" name="FEBS Lett.">
        <title>A novel gene derived from developing spinal cords, SCDGF, is a unique member of the PDGF/VEGF family.</title>
        <authorList>
            <person name="Hamada T."/>
            <person name="Ui-Tei K."/>
            <person name="Miyata Y."/>
        </authorList>
    </citation>
    <scope>NUCLEOTIDE SEQUENCE [MRNA] (ISOFORM 1)</scope>
    <scope>FUNCTION</scope>
    <scope>SUBCELLULAR LOCATION</scope>
    <source>
        <tissue>Brain</tissue>
    </source>
</reference>
<reference key="3">
    <citation type="journal article" date="2000" name="Nat. Cell Biol.">
        <title>PDGF-C is a new protease-activated ligand for the PDGF alpha-receptor.</title>
        <authorList>
            <person name="Li X."/>
            <person name="Ponten A."/>
            <person name="Aase K."/>
            <person name="Karlsson L."/>
            <person name="Abramsson A."/>
            <person name="Uutela M."/>
            <person name="Backstrom G."/>
            <person name="Hellstrom M."/>
            <person name="Bostrom H."/>
            <person name="Li H."/>
            <person name="Soriano P."/>
            <person name="Betsholtz C."/>
            <person name="Heldin C.H."/>
            <person name="Alitalo K."/>
            <person name="Ostman A."/>
            <person name="Eriksson U."/>
        </authorList>
    </citation>
    <scope>NUCLEOTIDE SEQUENCE [MRNA] (ISOFORM 1)</scope>
    <scope>FUNCTION</scope>
    <scope>TISSUE SPECIFICITY</scope>
    <scope>SUBCELLULAR LOCATION</scope>
    <source>
        <tissue>Lung</tissue>
    </source>
</reference>
<reference key="4">
    <citation type="journal article" date="2001" name="J. Biol. Chem.">
        <title>Platelet-derived growth factor C (PDGF-C), a novel growth factor that binds to PDGF alpha and beta receptor.</title>
        <authorList>
            <person name="Gilbertson D.G."/>
            <person name="Duff M.E."/>
            <person name="West J.W."/>
            <person name="Kelly J.D."/>
            <person name="Sheppard P.O."/>
            <person name="Hofstrand P.D."/>
            <person name="Gao Z."/>
            <person name="Shoemaker K."/>
            <person name="Bukowski T.R."/>
            <person name="Moore M."/>
            <person name="Feldhaus A.L."/>
            <person name="Humes J.M."/>
            <person name="Palmer T.E."/>
            <person name="Hart C.E."/>
        </authorList>
    </citation>
    <scope>NUCLEOTIDE SEQUENCE [MRNA] (ISOFORM 1)</scope>
    <scope>FUNCTION</scope>
    <scope>TISSUE SPECIFICITY</scope>
    <scope>SUBCELLULAR LOCATION</scope>
</reference>
<reference key="5">
    <citation type="submission" date="2007-12" db="EMBL/GenBank/DDBJ databases">
        <title>An N-terminally truncated isoform of human PDGF-C regulates the secretion of full-length PDGF-C and is deregulated in renal cell carcinoma.</title>
        <authorList>
            <person name="Zhao J."/>
            <person name="Liu Z."/>
            <person name="Liu T."/>
            <person name="Nilsson S."/>
            <person name="Nister M."/>
        </authorList>
    </citation>
    <scope>NUCLEOTIDE SEQUENCE [MRNA] (ISOFORM 4)</scope>
    <source>
        <tissue>Fetal brain</tissue>
    </source>
</reference>
<reference key="6">
    <citation type="journal article" date="2003" name="Genome Res.">
        <title>The secreted protein discovery initiative (SPDI), a large-scale effort to identify novel human secreted and transmembrane proteins: a bioinformatics assessment.</title>
        <authorList>
            <person name="Clark H.F."/>
            <person name="Gurney A.L."/>
            <person name="Abaya E."/>
            <person name="Baker K."/>
            <person name="Baldwin D.T."/>
            <person name="Brush J."/>
            <person name="Chen J."/>
            <person name="Chow B."/>
            <person name="Chui C."/>
            <person name="Crowley C."/>
            <person name="Currell B."/>
            <person name="Deuel B."/>
            <person name="Dowd P."/>
            <person name="Eaton D."/>
            <person name="Foster J.S."/>
            <person name="Grimaldi C."/>
            <person name="Gu Q."/>
            <person name="Hass P.E."/>
            <person name="Heldens S."/>
            <person name="Huang A."/>
            <person name="Kim H.S."/>
            <person name="Klimowski L."/>
            <person name="Jin Y."/>
            <person name="Johnson S."/>
            <person name="Lee J."/>
            <person name="Lewis L."/>
            <person name="Liao D."/>
            <person name="Mark M.R."/>
            <person name="Robbie E."/>
            <person name="Sanchez C."/>
            <person name="Schoenfeld J."/>
            <person name="Seshagiri S."/>
            <person name="Simmons L."/>
            <person name="Singh J."/>
            <person name="Smith V."/>
            <person name="Stinson J."/>
            <person name="Vagts A."/>
            <person name="Vandlen R.L."/>
            <person name="Watanabe C."/>
            <person name="Wieand D."/>
            <person name="Woods K."/>
            <person name="Xie M.-H."/>
            <person name="Yansura D.G."/>
            <person name="Yi S."/>
            <person name="Yu G."/>
            <person name="Yuan J."/>
            <person name="Zhang M."/>
            <person name="Zhang Z."/>
            <person name="Goddard A.D."/>
            <person name="Wood W.I."/>
            <person name="Godowski P.J."/>
            <person name="Gray A.M."/>
        </authorList>
    </citation>
    <scope>NUCLEOTIDE SEQUENCE [LARGE SCALE MRNA] (ISOFORM 1)</scope>
</reference>
<reference key="7">
    <citation type="journal article" date="2004" name="Nat. Genet.">
        <title>Complete sequencing and characterization of 21,243 full-length human cDNAs.</title>
        <authorList>
            <person name="Ota T."/>
            <person name="Suzuki Y."/>
            <person name="Nishikawa T."/>
            <person name="Otsuki T."/>
            <person name="Sugiyama T."/>
            <person name="Irie R."/>
            <person name="Wakamatsu A."/>
            <person name="Hayashi K."/>
            <person name="Sato H."/>
            <person name="Nagai K."/>
            <person name="Kimura K."/>
            <person name="Makita H."/>
            <person name="Sekine M."/>
            <person name="Obayashi M."/>
            <person name="Nishi T."/>
            <person name="Shibahara T."/>
            <person name="Tanaka T."/>
            <person name="Ishii S."/>
            <person name="Yamamoto J."/>
            <person name="Saito K."/>
            <person name="Kawai Y."/>
            <person name="Isono Y."/>
            <person name="Nakamura Y."/>
            <person name="Nagahari K."/>
            <person name="Murakami K."/>
            <person name="Yasuda T."/>
            <person name="Iwayanagi T."/>
            <person name="Wagatsuma M."/>
            <person name="Shiratori A."/>
            <person name="Sudo H."/>
            <person name="Hosoiri T."/>
            <person name="Kaku Y."/>
            <person name="Kodaira H."/>
            <person name="Kondo H."/>
            <person name="Sugawara M."/>
            <person name="Takahashi M."/>
            <person name="Kanda K."/>
            <person name="Yokoi T."/>
            <person name="Furuya T."/>
            <person name="Kikkawa E."/>
            <person name="Omura Y."/>
            <person name="Abe K."/>
            <person name="Kamihara K."/>
            <person name="Katsuta N."/>
            <person name="Sato K."/>
            <person name="Tanikawa M."/>
            <person name="Yamazaki M."/>
            <person name="Ninomiya K."/>
            <person name="Ishibashi T."/>
            <person name="Yamashita H."/>
            <person name="Murakawa K."/>
            <person name="Fujimori K."/>
            <person name="Tanai H."/>
            <person name="Kimata M."/>
            <person name="Watanabe M."/>
            <person name="Hiraoka S."/>
            <person name="Chiba Y."/>
            <person name="Ishida S."/>
            <person name="Ono Y."/>
            <person name="Takiguchi S."/>
            <person name="Watanabe S."/>
            <person name="Yosida M."/>
            <person name="Hotuta T."/>
            <person name="Kusano J."/>
            <person name="Kanehori K."/>
            <person name="Takahashi-Fujii A."/>
            <person name="Hara H."/>
            <person name="Tanase T.-O."/>
            <person name="Nomura Y."/>
            <person name="Togiya S."/>
            <person name="Komai F."/>
            <person name="Hara R."/>
            <person name="Takeuchi K."/>
            <person name="Arita M."/>
            <person name="Imose N."/>
            <person name="Musashino K."/>
            <person name="Yuuki H."/>
            <person name="Oshima A."/>
            <person name="Sasaki N."/>
            <person name="Aotsuka S."/>
            <person name="Yoshikawa Y."/>
            <person name="Matsunawa H."/>
            <person name="Ichihara T."/>
            <person name="Shiohata N."/>
            <person name="Sano S."/>
            <person name="Moriya S."/>
            <person name="Momiyama H."/>
            <person name="Satoh N."/>
            <person name="Takami S."/>
            <person name="Terashima Y."/>
            <person name="Suzuki O."/>
            <person name="Nakagawa S."/>
            <person name="Senoh A."/>
            <person name="Mizoguchi H."/>
            <person name="Goto Y."/>
            <person name="Shimizu F."/>
            <person name="Wakebe H."/>
            <person name="Hishigaki H."/>
            <person name="Watanabe T."/>
            <person name="Sugiyama A."/>
            <person name="Takemoto M."/>
            <person name="Kawakami B."/>
            <person name="Yamazaki M."/>
            <person name="Watanabe K."/>
            <person name="Kumagai A."/>
            <person name="Itakura S."/>
            <person name="Fukuzumi Y."/>
            <person name="Fujimori Y."/>
            <person name="Komiyama M."/>
            <person name="Tashiro H."/>
            <person name="Tanigami A."/>
            <person name="Fujiwara T."/>
            <person name="Ono T."/>
            <person name="Yamada K."/>
            <person name="Fujii Y."/>
            <person name="Ozaki K."/>
            <person name="Hirao M."/>
            <person name="Ohmori Y."/>
            <person name="Kawabata A."/>
            <person name="Hikiji T."/>
            <person name="Kobatake N."/>
            <person name="Inagaki H."/>
            <person name="Ikema Y."/>
            <person name="Okamoto S."/>
            <person name="Okitani R."/>
            <person name="Kawakami T."/>
            <person name="Noguchi S."/>
            <person name="Itoh T."/>
            <person name="Shigeta K."/>
            <person name="Senba T."/>
            <person name="Matsumura K."/>
            <person name="Nakajima Y."/>
            <person name="Mizuno T."/>
            <person name="Morinaga M."/>
            <person name="Sasaki M."/>
            <person name="Togashi T."/>
            <person name="Oyama M."/>
            <person name="Hata H."/>
            <person name="Watanabe M."/>
            <person name="Komatsu T."/>
            <person name="Mizushima-Sugano J."/>
            <person name="Satoh T."/>
            <person name="Shirai Y."/>
            <person name="Takahashi Y."/>
            <person name="Nakagawa K."/>
            <person name="Okumura K."/>
            <person name="Nagase T."/>
            <person name="Nomura N."/>
            <person name="Kikuchi H."/>
            <person name="Masuho Y."/>
            <person name="Yamashita R."/>
            <person name="Nakai K."/>
            <person name="Yada T."/>
            <person name="Nakamura Y."/>
            <person name="Ohara O."/>
            <person name="Isogai T."/>
            <person name="Sugano S."/>
        </authorList>
    </citation>
    <scope>NUCLEOTIDE SEQUENCE [LARGE SCALE MRNA] (ISOFORM 4)</scope>
    <source>
        <tissue>Prostate</tissue>
    </source>
</reference>
<reference key="8">
    <citation type="journal article" date="2005" name="Nature">
        <title>Generation and annotation of the DNA sequences of human chromosomes 2 and 4.</title>
        <authorList>
            <person name="Hillier L.W."/>
            <person name="Graves T.A."/>
            <person name="Fulton R.S."/>
            <person name="Fulton L.A."/>
            <person name="Pepin K.H."/>
            <person name="Minx P."/>
            <person name="Wagner-McPherson C."/>
            <person name="Layman D."/>
            <person name="Wylie K."/>
            <person name="Sekhon M."/>
            <person name="Becker M.C."/>
            <person name="Fewell G.A."/>
            <person name="Delehaunty K.D."/>
            <person name="Miner T.L."/>
            <person name="Nash W.E."/>
            <person name="Kremitzki C."/>
            <person name="Oddy L."/>
            <person name="Du H."/>
            <person name="Sun H."/>
            <person name="Bradshaw-Cordum H."/>
            <person name="Ali J."/>
            <person name="Carter J."/>
            <person name="Cordes M."/>
            <person name="Harris A."/>
            <person name="Isak A."/>
            <person name="van Brunt A."/>
            <person name="Nguyen C."/>
            <person name="Du F."/>
            <person name="Courtney L."/>
            <person name="Kalicki J."/>
            <person name="Ozersky P."/>
            <person name="Abbott S."/>
            <person name="Armstrong J."/>
            <person name="Belter E.A."/>
            <person name="Caruso L."/>
            <person name="Cedroni M."/>
            <person name="Cotton M."/>
            <person name="Davidson T."/>
            <person name="Desai A."/>
            <person name="Elliott G."/>
            <person name="Erb T."/>
            <person name="Fronick C."/>
            <person name="Gaige T."/>
            <person name="Haakenson W."/>
            <person name="Haglund K."/>
            <person name="Holmes A."/>
            <person name="Harkins R."/>
            <person name="Kim K."/>
            <person name="Kruchowski S.S."/>
            <person name="Strong C.M."/>
            <person name="Grewal N."/>
            <person name="Goyea E."/>
            <person name="Hou S."/>
            <person name="Levy A."/>
            <person name="Martinka S."/>
            <person name="Mead K."/>
            <person name="McLellan M.D."/>
            <person name="Meyer R."/>
            <person name="Randall-Maher J."/>
            <person name="Tomlinson C."/>
            <person name="Dauphin-Kohlberg S."/>
            <person name="Kozlowicz-Reilly A."/>
            <person name="Shah N."/>
            <person name="Swearengen-Shahid S."/>
            <person name="Snider J."/>
            <person name="Strong J.T."/>
            <person name="Thompson J."/>
            <person name="Yoakum M."/>
            <person name="Leonard S."/>
            <person name="Pearman C."/>
            <person name="Trani L."/>
            <person name="Radionenko M."/>
            <person name="Waligorski J.E."/>
            <person name="Wang C."/>
            <person name="Rock S.M."/>
            <person name="Tin-Wollam A.-M."/>
            <person name="Maupin R."/>
            <person name="Latreille P."/>
            <person name="Wendl M.C."/>
            <person name="Yang S.-P."/>
            <person name="Pohl C."/>
            <person name="Wallis J.W."/>
            <person name="Spieth J."/>
            <person name="Bieri T.A."/>
            <person name="Berkowicz N."/>
            <person name="Nelson J.O."/>
            <person name="Osborne J."/>
            <person name="Ding L."/>
            <person name="Meyer R."/>
            <person name="Sabo A."/>
            <person name="Shotland Y."/>
            <person name="Sinha P."/>
            <person name="Wohldmann P.E."/>
            <person name="Cook L.L."/>
            <person name="Hickenbotham M.T."/>
            <person name="Eldred J."/>
            <person name="Williams D."/>
            <person name="Jones T.A."/>
            <person name="She X."/>
            <person name="Ciccarelli F.D."/>
            <person name="Izaurralde E."/>
            <person name="Taylor J."/>
            <person name="Schmutz J."/>
            <person name="Myers R.M."/>
            <person name="Cox D.R."/>
            <person name="Huang X."/>
            <person name="McPherson J.D."/>
            <person name="Mardis E.R."/>
            <person name="Clifton S.W."/>
            <person name="Warren W.C."/>
            <person name="Chinwalla A.T."/>
            <person name="Eddy S.R."/>
            <person name="Marra M.A."/>
            <person name="Ovcharenko I."/>
            <person name="Furey T.S."/>
            <person name="Miller W."/>
            <person name="Eichler E.E."/>
            <person name="Bork P."/>
            <person name="Suyama M."/>
            <person name="Torrents D."/>
            <person name="Waterston R.H."/>
            <person name="Wilson R.K."/>
        </authorList>
    </citation>
    <scope>NUCLEOTIDE SEQUENCE [LARGE SCALE GENOMIC DNA]</scope>
</reference>
<reference key="9">
    <citation type="submission" date="2005-09" db="EMBL/GenBank/DDBJ databases">
        <authorList>
            <person name="Mural R.J."/>
            <person name="Istrail S."/>
            <person name="Sutton G.G."/>
            <person name="Florea L."/>
            <person name="Halpern A.L."/>
            <person name="Mobarry C.M."/>
            <person name="Lippert R."/>
            <person name="Walenz B."/>
            <person name="Shatkay H."/>
            <person name="Dew I."/>
            <person name="Miller J.R."/>
            <person name="Flanigan M.J."/>
            <person name="Edwards N.J."/>
            <person name="Bolanos R."/>
            <person name="Fasulo D."/>
            <person name="Halldorsson B.V."/>
            <person name="Hannenhalli S."/>
            <person name="Turner R."/>
            <person name="Yooseph S."/>
            <person name="Lu F."/>
            <person name="Nusskern D.R."/>
            <person name="Shue B.C."/>
            <person name="Zheng X.H."/>
            <person name="Zhong F."/>
            <person name="Delcher A.L."/>
            <person name="Huson D.H."/>
            <person name="Kravitz S.A."/>
            <person name="Mouchard L."/>
            <person name="Reinert K."/>
            <person name="Remington K.A."/>
            <person name="Clark A.G."/>
            <person name="Waterman M.S."/>
            <person name="Eichler E.E."/>
            <person name="Adams M.D."/>
            <person name="Hunkapiller M.W."/>
            <person name="Myers E.W."/>
            <person name="Venter J.C."/>
        </authorList>
    </citation>
    <scope>NUCLEOTIDE SEQUENCE [LARGE SCALE GENOMIC DNA]</scope>
</reference>
<reference key="10">
    <citation type="journal article" date="2004" name="Genome Res.">
        <title>The status, quality, and expansion of the NIH full-length cDNA project: the Mammalian Gene Collection (MGC).</title>
        <authorList>
            <consortium name="The MGC Project Team"/>
        </authorList>
    </citation>
    <scope>NUCLEOTIDE SEQUENCE [LARGE SCALE MRNA] (ISOFORM 1)</scope>
    <source>
        <tissue>Testis</tissue>
    </source>
</reference>
<reference key="11">
    <citation type="journal article" date="2001" name="Circulation">
        <title>Chromosomal location, exon structure, and vascular expression patterns of the human PDGFC and PDGFC genes.</title>
        <authorList>
            <person name="Uutela M."/>
            <person name="Lauren J."/>
            <person name="Bergsten E."/>
            <person name="Li X."/>
            <person name="Horelli-Kuitunen N."/>
            <person name="Eriksson U."/>
            <person name="Alitalo K."/>
        </authorList>
    </citation>
    <scope>TISSUE SPECIFICITY</scope>
</reference>
<reference key="12">
    <citation type="journal article" date="2001" name="Oncogene">
        <title>PDGF-C is an EWS/FLI induced transforming growth factor in Ewing family tumors.</title>
        <authorList>
            <person name="Zwerner J.P."/>
            <person name="May W.A."/>
        </authorList>
    </citation>
    <scope>INDUCTION</scope>
</reference>
<reference key="13">
    <citation type="journal article" date="2002" name="Biochem. Biophys. Res. Commun.">
        <title>Platelet-derived growth factor-B and -C and active alpha-receptors in medulloblastoma cells.</title>
        <authorList>
            <person name="Andrae J."/>
            <person name="Molander C."/>
            <person name="Smits A."/>
            <person name="Funa K."/>
            <person name="Nister M."/>
        </authorList>
    </citation>
    <scope>TISSUE SPECIFICITY</scope>
</reference>
<reference key="14">
    <citation type="journal article" date="2002" name="Int. J. Biochem. Cell Biol.">
        <title>Characterization of platelet-derived growth factor-C (PDGF-C): expression in normal and tumor cells, biological activity and chromosomal localization.</title>
        <authorList>
            <person name="Dijkmans J."/>
            <person name="Xu J."/>
            <person name="Masure S."/>
            <person name="Dhanaraj S."/>
            <person name="Gosiewska A."/>
            <person name="Geesin J."/>
            <person name="Sprengel J."/>
            <person name="Harris S."/>
            <person name="Verhasselt P."/>
            <person name="Gordon R."/>
            <person name="Yon J."/>
        </authorList>
    </citation>
    <scope>FUNCTION</scope>
    <scope>TISSUE SPECIFICITY</scope>
    <scope>ALTERNATIVE SPLICING (ISOFORMS 2 AND 3)</scope>
    <scope>GLYCOSYLATION</scope>
    <scope>MUTAGENESIS OF CYS-124</scope>
</reference>
<reference key="15">
    <citation type="journal article" date="2002" name="Oncogene">
        <title>Dominant negative PDGF-C inhibits growth of Ewing family tumor cell lines.</title>
        <authorList>
            <person name="Zwerner J.P."/>
            <person name="May W.A."/>
        </authorList>
    </citation>
    <scope>FUNCTION</scope>
</reference>
<reference key="16">
    <citation type="journal article" date="2003" name="J. Am. Soc. Nephrol.">
        <title>PDGF-C expression in the developing and normal adult human kidney and in glomerular diseases.</title>
        <authorList>
            <person name="Eitner F."/>
            <person name="Ostendorf T."/>
            <person name="Kretzler M."/>
            <person name="Cohen C.D."/>
            <person name="Eriksson U."/>
            <person name="Grone H.J."/>
            <person name="Floege J."/>
        </authorList>
    </citation>
    <scope>DEVELOPMENTAL STAGE</scope>
    <scope>INDUCTION</scope>
</reference>
<reference key="17">
    <citation type="journal article" date="2003" name="J. Biol. Chem.">
        <title>Platelet-derived growth factor (PDGF)-C, a PDGF family member with a vascular endothelial growth factor-like structure.</title>
        <authorList>
            <person name="Reigstad L.J."/>
            <person name="Sande H.M."/>
            <person name="Fluge O."/>
            <person name="Bruland O."/>
            <person name="Muga A."/>
            <person name="Varhaug J.E."/>
            <person name="Martinez A."/>
            <person name="Lillehaug J.R."/>
        </authorList>
    </citation>
    <scope>CHARACTERIZATION OF SECRETED ACTIVE FORM</scope>
    <scope>SUBUNIT</scope>
    <scope>DISULFIDE BONDS</scope>
    <scope>3D-STRUCTURE MODELING</scope>
</reference>
<reference key="18">
    <citation type="journal article" date="2004" name="Arterioscler. Thromb. Vasc. Biol.">
        <title>PDGF C is a selective alpha platelet-derived growth factor receptor agonist that is highly expressed in platelet alpha granules and vascular smooth muscle.</title>
        <authorList>
            <person name="Fang L."/>
            <person name="Yan Y."/>
            <person name="Komuves L.G."/>
            <person name="Yonkovich S."/>
            <person name="Sullivan C.M."/>
            <person name="Stringer B."/>
            <person name="Galbraith S."/>
            <person name="Lokker N.A."/>
            <person name="Hwang S.S."/>
            <person name="Nurden P."/>
            <person name="Phillips D.R."/>
            <person name="Giese N.A."/>
        </authorList>
    </citation>
    <scope>FUNCTION</scope>
    <scope>TISSUE SPECIFICITY</scope>
    <scope>SUBCELLULAR LOCATION</scope>
</reference>
<reference key="19">
    <citation type="journal article" date="2004" name="EMBO J.">
        <title>Tissue plasminogen activator is a potent activator of PDGF-CC.</title>
        <authorList>
            <person name="Fredriksson L."/>
            <person name="Li H."/>
            <person name="Fieber C."/>
            <person name="Li X."/>
            <person name="Eriksson U."/>
        </authorList>
    </citation>
    <scope>FUNCTION</scope>
    <scope>SUBCELLULAR LOCATION</scope>
    <scope>INTERACTION WITH PLAT</scope>
</reference>
<reference key="20">
    <citation type="journal article" date="2004" name="J. Biol. Chem.">
        <title>Fibroblast growth factor-2 induction of platelet-derived growth factor-C chain transcription in vascular smooth muscle cells is ERK-dependent but not JNK-dependent and mediated by Egr-1.</title>
        <authorList>
            <person name="Midgley V.C."/>
            <person name="Khachigian L.M."/>
        </authorList>
    </citation>
    <scope>INDUCTION BY EGR1</scope>
</reference>
<reference key="21">
    <citation type="journal article" date="2005" name="FEBS J.">
        <title>Structural and functional specificities of PDGF-C and PDGF-D, the novel members of the platelet-derived growth factors family.</title>
        <authorList>
            <person name="Reigstad L.J."/>
            <person name="Varhaug J.E."/>
            <person name="Lillehaug J.R."/>
        </authorList>
    </citation>
    <scope>REVIEW</scope>
</reference>
<reference key="22">
    <citation type="journal article" date="2005" name="J. Biol. Chem.">
        <title>Structural requirements for activation of latent platelet-derived growth factor CC by tissue plasminogen activator.</title>
        <authorList>
            <person name="Fredriksson L."/>
            <person name="Ehnman M."/>
            <person name="Fieber C."/>
            <person name="Eriksson U."/>
        </authorList>
    </citation>
    <scope>FUNCTION</scope>
    <scope>INTERACTION WITH PLAT</scope>
    <scope>SUBCELLULAR LOCATION</scope>
    <scope>MUTAGENESIS OF ARG-231; LYS-232 AND ARG-234</scope>
</reference>
<reference key="23">
    <citation type="journal article" date="2005" name="J. Cell. Physiol.">
        <title>Regulation of fibrogenic/fibrolytic genes by platelet-derived growth factor C, a novel growth factor, in human dermal fibroblasts.</title>
        <authorList>
            <person name="Jinnin M."/>
            <person name="Ihn H."/>
            <person name="Mimura Y."/>
            <person name="Asano Y."/>
            <person name="Yamane K."/>
            <person name="Tamaki K."/>
        </authorList>
    </citation>
    <scope>FUNCTION</scope>
</reference>
<reference key="24">
    <citation type="journal article" date="2005" name="Proc. Natl. Acad. Sci. U.S.A.">
        <title>Platelet-derived growth factor C induces liver fibrosis, steatosis, and hepatocellular carcinoma.</title>
        <authorList>
            <person name="Campbell J.S."/>
            <person name="Hughes S.D."/>
            <person name="Gilbertson D.G."/>
            <person name="Palmer T.E."/>
            <person name="Holdren M.S."/>
            <person name="Haran A.C."/>
            <person name="Odell M.M."/>
            <person name="Bauer R.L."/>
            <person name="Ren H.P."/>
            <person name="Haugen H.S."/>
            <person name="Yeh M.M."/>
            <person name="Fausto N."/>
        </authorList>
    </citation>
    <scope>FUNCTION</scope>
</reference>
<reference key="25">
    <citation type="journal article" date="2006" name="Am. J. Respir. Cell Mol. Biol.">
        <title>Fibroblast growth factor 2 and transforming growth factor beta1 synergism in human bronchial smooth muscle cell proliferation.</title>
        <authorList>
            <person name="Bosse Y."/>
            <person name="Thompson C."/>
            <person name="Stankova J."/>
            <person name="Rola-Pleszczynski M."/>
        </authorList>
    </citation>
    <scope>FUNCTION</scope>
    <scope>INDUCTION</scope>
</reference>
<reference key="26">
    <citation type="journal article" date="2006" name="Exp. Cell Res.">
        <title>Nuclear localisation of endogenous SUMO-1-modified PDGF-C in human thyroid tissue and cell lines.</title>
        <authorList>
            <person name="Reigstad L.J."/>
            <person name="Martinez A."/>
            <person name="Varhaug J.E."/>
            <person name="Lillehaug J.R."/>
        </authorList>
    </citation>
    <scope>SUBCELLULAR LOCATION</scope>
    <scope>SUMOYLATION</scope>
</reference>
<reference key="27">
    <citation type="journal article" date="2007" name="Invest. Ophthalmol. Vis. Sci.">
        <title>PDGF-C and -D induced proliferation/migration of human RPE is abolished by inflammatory cytokines.</title>
        <authorList>
            <person name="Li R."/>
            <person name="Maminishkis A."/>
            <person name="Wang F.E."/>
            <person name="Miller S.S."/>
        </authorList>
    </citation>
    <scope>FUNCTION</scope>
    <scope>TISSUE SPECIFICITY</scope>
</reference>
<reference key="28">
    <citation type="journal article" date="2008" name="Fertil. Steril.">
        <title>Increased expression of platelet-derived growth factor C messenger ribonucleic acid in uterine leiomyomata.</title>
        <authorList>
            <person name="Hwu Y.M."/>
            <person name="Li S.H."/>
            <person name="Lee R.K."/>
            <person name="Tsai Y.H."/>
            <person name="Yeh T.S."/>
            <person name="Lin S.Y."/>
        </authorList>
    </citation>
    <scope>TISSUE SPECIFICITY</scope>
</reference>
<reference key="29">
    <citation type="journal article" date="2008" name="Invest. Ophthalmol. Vis. Sci.">
        <title>Plasmin is the major protease responsible for processing PDGF-C in the vitreous of patients with proliferative vitreoretinopathy.</title>
        <authorList>
            <person name="Lei H."/>
            <person name="Velez G."/>
            <person name="Hovland P."/>
            <person name="Hirose T."/>
            <person name="Kazlauskas A."/>
        </authorList>
    </citation>
    <scope>CLEAVAGE BY PLG</scope>
</reference>
<keyword id="KW-0025">Alternative splicing</keyword>
<keyword id="KW-1003">Cell membrane</keyword>
<keyword id="KW-0165">Cleavage on pair of basic residues</keyword>
<keyword id="KW-0963">Cytoplasm</keyword>
<keyword id="KW-0217">Developmental protein</keyword>
<keyword id="KW-1015">Disulfide bond</keyword>
<keyword id="KW-0325">Glycoprotein</keyword>
<keyword id="KW-0339">Growth factor</keyword>
<keyword id="KW-0472">Membrane</keyword>
<keyword id="KW-0497">Mitogen</keyword>
<keyword id="KW-0539">Nucleus</keyword>
<keyword id="KW-1267">Proteomics identification</keyword>
<keyword id="KW-1185">Reference proteome</keyword>
<keyword id="KW-0964">Secreted</keyword>
<keyword id="KW-0732">Signal</keyword>
<keyword id="KW-0832">Ubl conjugation</keyword>
<gene>
    <name type="primary">PDGFC</name>
    <name type="synonym">SCDGF</name>
    <name type="ORF">UNQ174/PRO200</name>
</gene>
<dbReference type="EMBL" id="AF091434">
    <property type="protein sequence ID" value="AAF00049.1"/>
    <property type="molecule type" value="mRNA"/>
</dbReference>
<dbReference type="EMBL" id="AB033831">
    <property type="protein sequence ID" value="BAB03266.1"/>
    <property type="molecule type" value="mRNA"/>
</dbReference>
<dbReference type="EMBL" id="AF244813">
    <property type="protein sequence ID" value="AAF80597.1"/>
    <property type="molecule type" value="mRNA"/>
</dbReference>
<dbReference type="EMBL" id="AF260738">
    <property type="protein sequence ID" value="AAK51637.1"/>
    <property type="molecule type" value="mRNA"/>
</dbReference>
<dbReference type="EMBL" id="AM922296">
    <property type="protein sequence ID" value="CAP58278.1"/>
    <property type="molecule type" value="mRNA"/>
</dbReference>
<dbReference type="EMBL" id="AY358493">
    <property type="protein sequence ID" value="AAQ88857.1"/>
    <property type="molecule type" value="mRNA"/>
</dbReference>
<dbReference type="EMBL" id="AK300480">
    <property type="protein sequence ID" value="BAG62196.1"/>
    <property type="molecule type" value="mRNA"/>
</dbReference>
<dbReference type="EMBL" id="AC092608">
    <property type="protein sequence ID" value="AAY40906.1"/>
    <property type="molecule type" value="Genomic_DNA"/>
</dbReference>
<dbReference type="EMBL" id="AC093325">
    <property type="status" value="NOT_ANNOTATED_CDS"/>
    <property type="molecule type" value="Genomic_DNA"/>
</dbReference>
<dbReference type="EMBL" id="CH471056">
    <property type="protein sequence ID" value="EAX04874.1"/>
    <property type="molecule type" value="Genomic_DNA"/>
</dbReference>
<dbReference type="EMBL" id="CH471056">
    <property type="protein sequence ID" value="EAX04875.1"/>
    <property type="molecule type" value="Genomic_DNA"/>
</dbReference>
<dbReference type="EMBL" id="BC136662">
    <property type="protein sequence ID" value="AAI36663.1"/>
    <property type="molecule type" value="mRNA"/>
</dbReference>
<dbReference type="CCDS" id="CCDS3795.1">
    <molecule id="Q9NRA1-1"/>
</dbReference>
<dbReference type="RefSeq" id="NP_057289.1">
    <molecule id="Q9NRA1-1"/>
    <property type="nucleotide sequence ID" value="NM_016205.3"/>
</dbReference>
<dbReference type="RefSeq" id="XP_016863945.1">
    <property type="nucleotide sequence ID" value="XM_017008456.1"/>
</dbReference>
<dbReference type="RefSeq" id="XP_047271926.1">
    <molecule id="Q9NRA1-4"/>
    <property type="nucleotide sequence ID" value="XM_047415970.1"/>
</dbReference>
<dbReference type="RefSeq" id="XP_047271927.1">
    <molecule id="Q9NRA1-4"/>
    <property type="nucleotide sequence ID" value="XM_047415971.1"/>
</dbReference>
<dbReference type="RefSeq" id="XP_047271928.1">
    <molecule id="Q9NRA1-4"/>
    <property type="nucleotide sequence ID" value="XM_047415972.1"/>
</dbReference>
<dbReference type="SMR" id="Q9NRA1"/>
<dbReference type="BioGRID" id="121032">
    <property type="interactions" value="13"/>
</dbReference>
<dbReference type="ComplexPortal" id="CPX-2879">
    <property type="entry name" value="Platelet-derived growth factor CC complex"/>
</dbReference>
<dbReference type="ComplexPortal" id="CPX-2887">
    <property type="entry name" value="PDGF receptor alpha - PDGF-CC complex"/>
</dbReference>
<dbReference type="ComplexPortal" id="CPX-2888">
    <property type="entry name" value="PDGF receptor alpha-beta - PDGF-CC complex"/>
</dbReference>
<dbReference type="ComplexPortal" id="CPX-2891">
    <property type="entry name" value="PDGF receptor beta - PDGF-CC complex"/>
</dbReference>
<dbReference type="DIP" id="DIP-59339N"/>
<dbReference type="FunCoup" id="Q9NRA1">
    <property type="interactions" value="1380"/>
</dbReference>
<dbReference type="IntAct" id="Q9NRA1">
    <property type="interactions" value="8"/>
</dbReference>
<dbReference type="STRING" id="9606.ENSP00000422464"/>
<dbReference type="GlyCosmos" id="Q9NRA1">
    <property type="glycosylation" value="2 sites, No reported glycans"/>
</dbReference>
<dbReference type="GlyGen" id="Q9NRA1">
    <property type="glycosylation" value="3 sites, 5 N-linked glycans (2 sites)"/>
</dbReference>
<dbReference type="iPTMnet" id="Q9NRA1"/>
<dbReference type="PhosphoSitePlus" id="Q9NRA1"/>
<dbReference type="BioMuta" id="PDGFC"/>
<dbReference type="DMDM" id="205830662"/>
<dbReference type="jPOST" id="Q9NRA1"/>
<dbReference type="MassIVE" id="Q9NRA1"/>
<dbReference type="PaxDb" id="9606-ENSP00000422464"/>
<dbReference type="PeptideAtlas" id="Q9NRA1"/>
<dbReference type="ProteomicsDB" id="5147"/>
<dbReference type="ProteomicsDB" id="82318">
    <molecule id="Q9NRA1-1"/>
</dbReference>
<dbReference type="ProteomicsDB" id="82319">
    <molecule id="Q9NRA1-2"/>
</dbReference>
<dbReference type="ProteomicsDB" id="82320">
    <molecule id="Q9NRA1-3"/>
</dbReference>
<dbReference type="Pumba" id="Q9NRA1"/>
<dbReference type="Antibodypedia" id="28096">
    <property type="antibodies" value="354 antibodies from 29 providers"/>
</dbReference>
<dbReference type="DNASU" id="56034"/>
<dbReference type="Ensembl" id="ENST00000422544.2">
    <molecule id="Q9NRA1-2"/>
    <property type="protein sequence ID" value="ENSP00000410048.2"/>
    <property type="gene ID" value="ENSG00000145431.11"/>
</dbReference>
<dbReference type="Ensembl" id="ENST00000502773.6">
    <molecule id="Q9NRA1-1"/>
    <property type="protein sequence ID" value="ENSP00000422464.1"/>
    <property type="gene ID" value="ENSG00000145431.11"/>
</dbReference>
<dbReference type="GeneID" id="56034"/>
<dbReference type="KEGG" id="hsa:56034"/>
<dbReference type="MANE-Select" id="ENST00000502773.6">
    <property type="protein sequence ID" value="ENSP00000422464.1"/>
    <property type="RefSeq nucleotide sequence ID" value="NM_016205.3"/>
    <property type="RefSeq protein sequence ID" value="NP_057289.1"/>
</dbReference>
<dbReference type="UCSC" id="uc003iph.3">
    <molecule id="Q9NRA1-1"/>
    <property type="organism name" value="human"/>
</dbReference>
<dbReference type="AGR" id="HGNC:8801"/>
<dbReference type="CTD" id="56034"/>
<dbReference type="DisGeNET" id="56034"/>
<dbReference type="GeneCards" id="PDGFC"/>
<dbReference type="HGNC" id="HGNC:8801">
    <property type="gene designation" value="PDGFC"/>
</dbReference>
<dbReference type="HPA" id="ENSG00000145431">
    <property type="expression patterns" value="Tissue enhanced (parathyroid)"/>
</dbReference>
<dbReference type="MIM" id="608452">
    <property type="type" value="gene"/>
</dbReference>
<dbReference type="neXtProt" id="NX_Q9NRA1"/>
<dbReference type="OpenTargets" id="ENSG00000145431"/>
<dbReference type="PharmGKB" id="PA33146"/>
<dbReference type="VEuPathDB" id="HostDB:ENSG00000145431"/>
<dbReference type="eggNOG" id="ENOG502QUUR">
    <property type="taxonomic scope" value="Eukaryota"/>
</dbReference>
<dbReference type="GeneTree" id="ENSGT00940000158645"/>
<dbReference type="HOGENOM" id="CLU_037859_0_0_1"/>
<dbReference type="InParanoid" id="Q9NRA1"/>
<dbReference type="OMA" id="MLIQLTF"/>
<dbReference type="OrthoDB" id="8641091at2759"/>
<dbReference type="PAN-GO" id="Q9NRA1">
    <property type="GO annotations" value="9 GO annotations based on evolutionary models"/>
</dbReference>
<dbReference type="PhylomeDB" id="Q9NRA1"/>
<dbReference type="TreeFam" id="TF332130"/>
<dbReference type="PathwayCommons" id="Q9NRA1"/>
<dbReference type="Reactome" id="R-HSA-186797">
    <molecule id="Q9NRA1-1"/>
    <property type="pathway name" value="Signaling by PDGF"/>
</dbReference>
<dbReference type="SignaLink" id="Q9NRA1"/>
<dbReference type="SIGNOR" id="Q9NRA1"/>
<dbReference type="BioGRID-ORCS" id="56034">
    <property type="hits" value="16 hits in 1148 CRISPR screens"/>
</dbReference>
<dbReference type="ChiTaRS" id="PDGFC">
    <property type="organism name" value="human"/>
</dbReference>
<dbReference type="GeneWiki" id="PDGFC"/>
<dbReference type="GenomeRNAi" id="56034"/>
<dbReference type="Pharos" id="Q9NRA1">
    <property type="development level" value="Tbio"/>
</dbReference>
<dbReference type="PRO" id="PR:Q9NRA1"/>
<dbReference type="Proteomes" id="UP000005640">
    <property type="component" value="Chromosome 4"/>
</dbReference>
<dbReference type="RNAct" id="Q9NRA1">
    <property type="molecule type" value="protein"/>
</dbReference>
<dbReference type="Bgee" id="ENSG00000145431">
    <property type="expression patterns" value="Expressed in parotid gland and 199 other cell types or tissues"/>
</dbReference>
<dbReference type="ExpressionAtlas" id="Q9NRA1">
    <property type="expression patterns" value="baseline and differential"/>
</dbReference>
<dbReference type="GO" id="GO:0009986">
    <property type="term" value="C:cell surface"/>
    <property type="evidence" value="ECO:0000314"/>
    <property type="project" value="BHF-UCL"/>
</dbReference>
<dbReference type="GO" id="GO:0005829">
    <property type="term" value="C:cytosol"/>
    <property type="evidence" value="ECO:0000314"/>
    <property type="project" value="HPA"/>
</dbReference>
<dbReference type="GO" id="GO:0005788">
    <property type="term" value="C:endoplasmic reticulum lumen"/>
    <property type="evidence" value="ECO:0000304"/>
    <property type="project" value="Reactome"/>
</dbReference>
<dbReference type="GO" id="GO:0070062">
    <property type="term" value="C:extracellular exosome"/>
    <property type="evidence" value="ECO:0007005"/>
    <property type="project" value="UniProtKB"/>
</dbReference>
<dbReference type="GO" id="GO:0005576">
    <property type="term" value="C:extracellular region"/>
    <property type="evidence" value="ECO:0000304"/>
    <property type="project" value="Reactome"/>
</dbReference>
<dbReference type="GO" id="GO:0005615">
    <property type="term" value="C:extracellular space"/>
    <property type="evidence" value="ECO:0000314"/>
    <property type="project" value="BHF-UCL"/>
</dbReference>
<dbReference type="GO" id="GO:0000139">
    <property type="term" value="C:Golgi membrane"/>
    <property type="evidence" value="ECO:0000304"/>
    <property type="project" value="Reactome"/>
</dbReference>
<dbReference type="GO" id="GO:0005634">
    <property type="term" value="C:nucleus"/>
    <property type="evidence" value="ECO:0007669"/>
    <property type="project" value="UniProtKB-SubCell"/>
</dbReference>
<dbReference type="GO" id="GO:0005886">
    <property type="term" value="C:plasma membrane"/>
    <property type="evidence" value="ECO:0000314"/>
    <property type="project" value="HPA"/>
</dbReference>
<dbReference type="GO" id="GO:0008083">
    <property type="term" value="F:growth factor activity"/>
    <property type="evidence" value="ECO:0007669"/>
    <property type="project" value="UniProtKB-KW"/>
</dbReference>
<dbReference type="GO" id="GO:0005161">
    <property type="term" value="F:platelet-derived growth factor receptor binding"/>
    <property type="evidence" value="ECO:0000353"/>
    <property type="project" value="BHF-UCL"/>
</dbReference>
<dbReference type="GO" id="GO:0042803">
    <property type="term" value="F:protein homodimerization activity"/>
    <property type="evidence" value="ECO:0000353"/>
    <property type="project" value="BHF-UCL"/>
</dbReference>
<dbReference type="GO" id="GO:0009887">
    <property type="term" value="P:animal organ morphogenesis"/>
    <property type="evidence" value="ECO:0007669"/>
    <property type="project" value="Ensembl"/>
</dbReference>
<dbReference type="GO" id="GO:0060348">
    <property type="term" value="P:bone development"/>
    <property type="evidence" value="ECO:0007669"/>
    <property type="project" value="Ensembl"/>
</dbReference>
<dbReference type="GO" id="GO:0071230">
    <property type="term" value="P:cellular response to amino acid stimulus"/>
    <property type="evidence" value="ECO:0007669"/>
    <property type="project" value="Ensembl"/>
</dbReference>
<dbReference type="GO" id="GO:0007417">
    <property type="term" value="P:central nervous system development"/>
    <property type="evidence" value="ECO:0000304"/>
    <property type="project" value="UniProtKB"/>
</dbReference>
<dbReference type="GO" id="GO:0048565">
    <property type="term" value="P:digestive tract development"/>
    <property type="evidence" value="ECO:0007669"/>
    <property type="project" value="Ensembl"/>
</dbReference>
<dbReference type="GO" id="GO:0048144">
    <property type="term" value="P:fibroblast proliferation"/>
    <property type="evidence" value="ECO:0007669"/>
    <property type="project" value="Ensembl"/>
</dbReference>
<dbReference type="GO" id="GO:0048008">
    <property type="term" value="P:platelet-derived growth factor receptor signaling pathway"/>
    <property type="evidence" value="ECO:0000314"/>
    <property type="project" value="BHF-UCL"/>
</dbReference>
<dbReference type="GO" id="GO:0051781">
    <property type="term" value="P:positive regulation of cell division"/>
    <property type="evidence" value="ECO:0007669"/>
    <property type="project" value="UniProtKB-KW"/>
</dbReference>
<dbReference type="GO" id="GO:0030335">
    <property type="term" value="P:positive regulation of cell migration"/>
    <property type="evidence" value="ECO:0000318"/>
    <property type="project" value="GO_Central"/>
</dbReference>
<dbReference type="GO" id="GO:0008284">
    <property type="term" value="P:positive regulation of cell population proliferation"/>
    <property type="evidence" value="ECO:0000314"/>
    <property type="project" value="BHF-UCL"/>
</dbReference>
<dbReference type="GO" id="GO:0120162">
    <property type="term" value="P:positive regulation of cold-induced thermogenesis"/>
    <property type="evidence" value="ECO:0000250"/>
    <property type="project" value="YuBioLab"/>
</dbReference>
<dbReference type="GO" id="GO:0070374">
    <property type="term" value="P:positive regulation of ERK1 and ERK2 cascade"/>
    <property type="evidence" value="ECO:0000318"/>
    <property type="project" value="GO_Central"/>
</dbReference>
<dbReference type="GO" id="GO:0048146">
    <property type="term" value="P:positive regulation of fibroblast proliferation"/>
    <property type="evidence" value="ECO:0000314"/>
    <property type="project" value="BHF-UCL"/>
</dbReference>
<dbReference type="GO" id="GO:0051897">
    <property type="term" value="P:positive regulation of phosphatidylinositol 3-kinase/protein kinase B signal transduction"/>
    <property type="evidence" value="ECO:0000318"/>
    <property type="project" value="GO_Central"/>
</dbReference>
<dbReference type="CDD" id="cd00041">
    <property type="entry name" value="CUB"/>
    <property type="match status" value="1"/>
</dbReference>
<dbReference type="CDD" id="cd00135">
    <property type="entry name" value="PDGF"/>
    <property type="match status" value="1"/>
</dbReference>
<dbReference type="FunFam" id="2.10.90.10:FF:000010">
    <property type="entry name" value="Platelet derived growth factor C"/>
    <property type="match status" value="1"/>
</dbReference>
<dbReference type="FunFam" id="2.60.120.290:FF:000017">
    <property type="entry name" value="Platelet derived growth factor C"/>
    <property type="match status" value="1"/>
</dbReference>
<dbReference type="Gene3D" id="2.10.90.10">
    <property type="entry name" value="Cystine-knot cytokines"/>
    <property type="match status" value="1"/>
</dbReference>
<dbReference type="Gene3D" id="2.60.120.290">
    <property type="entry name" value="Spermadhesin, CUB domain"/>
    <property type="match status" value="1"/>
</dbReference>
<dbReference type="InterPro" id="IPR000859">
    <property type="entry name" value="CUB_dom"/>
</dbReference>
<dbReference type="InterPro" id="IPR029034">
    <property type="entry name" value="Cystine-knot_cytokine"/>
</dbReference>
<dbReference type="InterPro" id="IPR000072">
    <property type="entry name" value="PDGF/VEGF_dom"/>
</dbReference>
<dbReference type="InterPro" id="IPR035914">
    <property type="entry name" value="Sperma_CUB_dom_sf"/>
</dbReference>
<dbReference type="PANTHER" id="PTHR11633">
    <property type="entry name" value="PLATELET-DERIVED GROWTH FACTOR"/>
    <property type="match status" value="1"/>
</dbReference>
<dbReference type="PANTHER" id="PTHR11633:SF5">
    <property type="entry name" value="PLATELET-DERIVED GROWTH FACTOR C"/>
    <property type="match status" value="1"/>
</dbReference>
<dbReference type="Pfam" id="PF00431">
    <property type="entry name" value="CUB"/>
    <property type="match status" value="1"/>
</dbReference>
<dbReference type="Pfam" id="PF00341">
    <property type="entry name" value="PDGF"/>
    <property type="match status" value="1"/>
</dbReference>
<dbReference type="SMART" id="SM00042">
    <property type="entry name" value="CUB"/>
    <property type="match status" value="1"/>
</dbReference>
<dbReference type="SMART" id="SM00141">
    <property type="entry name" value="PDGF"/>
    <property type="match status" value="1"/>
</dbReference>
<dbReference type="SUPFAM" id="SSF57501">
    <property type="entry name" value="Cystine-knot cytokines"/>
    <property type="match status" value="1"/>
</dbReference>
<dbReference type="SUPFAM" id="SSF49854">
    <property type="entry name" value="Spermadhesin, CUB domain"/>
    <property type="match status" value="1"/>
</dbReference>
<dbReference type="PROSITE" id="PS01180">
    <property type="entry name" value="CUB"/>
    <property type="match status" value="1"/>
</dbReference>
<dbReference type="PROSITE" id="PS50278">
    <property type="entry name" value="PDGF_2"/>
    <property type="match status" value="1"/>
</dbReference>
<feature type="signal peptide" evidence="2">
    <location>
        <begin position="1"/>
        <end position="22"/>
    </location>
</feature>
<feature type="chain" id="PRO_0000343871" description="Platelet-derived growth factor C, latent form">
    <location>
        <begin position="23"/>
        <end position="345"/>
    </location>
</feature>
<feature type="chain" id="PRO_0000343872" description="Platelet-derived growth factor C, receptor-binding form">
    <location>
        <begin status="unknown"/>
        <end position="345"/>
    </location>
</feature>
<feature type="domain" description="CUB" evidence="3">
    <location>
        <begin position="46"/>
        <end position="163"/>
    </location>
</feature>
<feature type="site" description="Cleavage">
    <location>
        <begin position="225"/>
        <end position="226"/>
    </location>
</feature>
<feature type="site" description="Cleavage" evidence="2">
    <location>
        <begin position="231"/>
        <end position="232"/>
    </location>
</feature>
<feature type="site" description="Cleavage" evidence="2">
    <location>
        <begin position="234"/>
        <end position="235"/>
    </location>
</feature>
<feature type="glycosylation site" description="N-linked (GlcNAc...) asparagine" evidence="2">
    <location>
        <position position="25"/>
    </location>
</feature>
<feature type="glycosylation site" description="N-linked (GlcNAc...) asparagine" evidence="1">
    <location>
        <position position="55"/>
    </location>
</feature>
<feature type="disulfide bond" evidence="3">
    <location>
        <begin position="104"/>
        <end position="124"/>
    </location>
</feature>
<feature type="disulfide bond" evidence="28">
    <location>
        <begin position="250"/>
        <end position="294"/>
    </location>
</feature>
<feature type="disulfide bond" description="Interchain (with C-286)" evidence="28">
    <location>
        <position position="274"/>
    </location>
</feature>
<feature type="disulfide bond" evidence="28">
    <location>
        <begin position="280"/>
        <end position="335"/>
    </location>
</feature>
<feature type="disulfide bond" description="Interchain (with C-274)" evidence="28">
    <location>
        <position position="286"/>
    </location>
</feature>
<feature type="disulfide bond" evidence="28">
    <location>
        <begin position="287"/>
        <end position="337"/>
    </location>
</feature>
<feature type="splice variant" id="VSP_047606" description="In isoform 4." evidence="25 26">
    <location>
        <begin position="1"/>
        <end position="163"/>
    </location>
</feature>
<feature type="splice variant" id="VSP_034701" description="In isoform 3." evidence="27">
    <original>GFCIHYNIVMPQF</original>
    <variation>SNRGGKIIQLHTS</variation>
    <location>
        <begin position="155"/>
        <end position="167"/>
    </location>
</feature>
<feature type="splice variant" id="VSP_034702" description="In isoform 3." evidence="27">
    <location>
        <begin position="168"/>
        <end position="345"/>
    </location>
</feature>
<feature type="splice variant" id="VSP_034703" description="In isoform 2." evidence="27">
    <location>
        <begin position="244"/>
        <end position="306"/>
    </location>
</feature>
<feature type="mutagenesis site" description="Loss of mitogenic activity of CUB domain in coronary artery smooth muscle cells." evidence="10">
    <original>C</original>
    <variation>S</variation>
    <location>
        <position position="124"/>
    </location>
</feature>
<feature type="mutagenesis site" description="Essential for cleavage by PLAT." evidence="20">
    <original>R</original>
    <variation>A</variation>
    <location>
        <position position="231"/>
    </location>
</feature>
<feature type="mutagenesis site" description="Not essential for cleavage by PLAT." evidence="20">
    <original>K</original>
    <variation>A</variation>
    <location>
        <position position="232"/>
    </location>
</feature>
<feature type="mutagenesis site" description="Not essential for cleavage by PLAT." evidence="20">
    <original>R</original>
    <variation>A</variation>
    <location>
        <position position="234"/>
    </location>
</feature>
<feature type="sequence conflict" description="In Ref. 3; AAF80597." evidence="27" ref="3">
    <original>L</original>
    <variation>V</variation>
    <location>
        <position position="9"/>
    </location>
</feature>
<feature type="sequence conflict" description="In Ref. 3; AAF80597." evidence="27" ref="3">
    <original>Q</original>
    <variation>R</variation>
    <location>
        <position position="18"/>
    </location>
</feature>
<evidence type="ECO:0000250" key="1"/>
<evidence type="ECO:0000255" key="2"/>
<evidence type="ECO:0000255" key="3">
    <source>
        <dbReference type="PROSITE-ProRule" id="PRU00059"/>
    </source>
</evidence>
<evidence type="ECO:0000269" key="4">
    <source>
    </source>
</evidence>
<evidence type="ECO:0000269" key="5">
    <source>
    </source>
</evidence>
<evidence type="ECO:0000269" key="6">
    <source>
    </source>
</evidence>
<evidence type="ECO:0000269" key="7">
    <source>
    </source>
</evidence>
<evidence type="ECO:0000269" key="8">
    <source>
    </source>
</evidence>
<evidence type="ECO:0000269" key="9">
    <source>
    </source>
</evidence>
<evidence type="ECO:0000269" key="10">
    <source>
    </source>
</evidence>
<evidence type="ECO:0000269" key="11">
    <source>
    </source>
</evidence>
<evidence type="ECO:0000269" key="12">
    <source>
    </source>
</evidence>
<evidence type="ECO:0000269" key="13">
    <source>
    </source>
</evidence>
<evidence type="ECO:0000269" key="14">
    <source>
    </source>
</evidence>
<evidence type="ECO:0000269" key="15">
    <source>
    </source>
</evidence>
<evidence type="ECO:0000269" key="16">
    <source>
    </source>
</evidence>
<evidence type="ECO:0000269" key="17">
    <source>
    </source>
</evidence>
<evidence type="ECO:0000269" key="18">
    <source>
    </source>
</evidence>
<evidence type="ECO:0000269" key="19">
    <source>
    </source>
</evidence>
<evidence type="ECO:0000269" key="20">
    <source>
    </source>
</evidence>
<evidence type="ECO:0000269" key="21">
    <source>
    </source>
</evidence>
<evidence type="ECO:0000269" key="22">
    <source>
    </source>
</evidence>
<evidence type="ECO:0000269" key="23">
    <source>
    </source>
</evidence>
<evidence type="ECO:0000269" key="24">
    <source>
    </source>
</evidence>
<evidence type="ECO:0000303" key="25">
    <source>
    </source>
</evidence>
<evidence type="ECO:0000303" key="26">
    <source ref="5"/>
</evidence>
<evidence type="ECO:0000305" key="27"/>
<evidence type="ECO:0000305" key="28">
    <source>
    </source>
</evidence>
<name>PDGFC_HUMAN</name>
<protein>
    <recommendedName>
        <fullName>Platelet-derived growth factor C</fullName>
        <shortName>PDGF-C</shortName>
    </recommendedName>
    <alternativeName>
        <fullName>Fallotein</fullName>
    </alternativeName>
    <alternativeName>
        <fullName>Spinal cord-derived growth factor</fullName>
        <shortName>SCDGF</shortName>
    </alternativeName>
    <alternativeName>
        <fullName>VEGF-E</fullName>
    </alternativeName>
    <component>
        <recommendedName>
            <fullName>Platelet-derived growth factor C, latent form</fullName>
            <shortName>PDGFC latent form</shortName>
        </recommendedName>
    </component>
    <component>
        <recommendedName>
            <fullName>Platelet-derived growth factor C, receptor-binding form</fullName>
            <shortName>PDGFC receptor-binding form</shortName>
        </recommendedName>
    </component>
</protein>
<comment type="function">
    <text evidence="4 5 7 10 11 15 17 18 19 20 21 24">Growth factor that plays an essential role in the regulation of embryonic development, cell proliferation, cell migration, survival and chemotaxis. Potent mitogen and chemoattractant for cells of mesenchymal origin. Required for normal skeleton formation during embryonic development, especially for normal development of the craniofacial skeleton and for normal development of the palate. Required for normal skin morphogenesis during embryonic development. Plays an important role in wound healing, where it appears to be involved in three stages: inflammation, proliferation and remodeling. Plays an important role in angiogenesis and blood vessel development. Involved in fibrotic processes, in which transformation of interstitial fibroblasts into myofibroblasts plus collagen deposition occurs. The CUB domain has mitogenic activity in coronary artery smooth muscle cells, suggesting a role beyond the maintenance of the latency of the PDGF domain. In the nucleus, PDGFC seems to have additional function.</text>
</comment>
<comment type="subunit">
    <text evidence="13 17 20">Homodimer; disulfide-linked. Interacts with PDGFRA homodimers, and with heterodimers formed by PDGFRA and PDGFRB. Interacts (via CUB domain) with PLAT (via kringle domain).</text>
</comment>
<comment type="interaction">
    <interactant intactId="EBI-8833587">
        <id>Q9NRA1</id>
    </interactant>
    <interactant intactId="EBI-2861522">
        <id>P16234</id>
        <label>PDGFRA</label>
    </interactant>
    <organismsDiffer>false</organismsDiffer>
    <experiments>3</experiments>
</comment>
<comment type="interaction">
    <interactant intactId="EBI-15499301">
        <id>Q9NRA1-1</id>
    </interactant>
    <interactant intactId="EBI-15499330">
        <id>P16234-1</id>
        <label>PDGFRA</label>
    </interactant>
    <organismsDiffer>false</organismsDiffer>
    <experiments>2</experiments>
</comment>
<comment type="subcellular location">
    <subcellularLocation>
        <location evidence="22">Cytoplasm</location>
        <location evidence="22">Cytosol</location>
    </subcellularLocation>
    <subcellularLocation>
        <location evidence="4 5 7 15 17 20">Secreted</location>
    </subcellularLocation>
    <subcellularLocation>
        <location evidence="22">Nucleus</location>
    </subcellularLocation>
    <subcellularLocation>
        <location evidence="15">Cytoplasmic granule</location>
    </subcellularLocation>
    <subcellularLocation>
        <location evidence="22">Cell membrane</location>
    </subcellularLocation>
    <text evidence="22">Sumoylated form is predominant in the nucleus (PubMed:15247255). Stored in alpha granules in platelets (PubMed:15061151).</text>
</comment>
<comment type="alternative products">
    <event type="alternative splicing"/>
    <isoform>
        <id>Q9NRA1-1</id>
        <name>1</name>
        <sequence type="displayed"/>
    </isoform>
    <isoform>
        <id>Q9NRA1-2</id>
        <name>2</name>
        <sequence type="described" ref="VSP_034703"/>
    </isoform>
    <isoform>
        <id>Q9NRA1-3</id>
        <name>3</name>
        <sequence type="described" ref="VSP_034701 VSP_034702"/>
    </isoform>
    <isoform>
        <id>Q9NRA1-4</id>
        <name>4</name>
        <sequence type="described" ref="VSP_047606"/>
    </isoform>
</comment>
<comment type="tissue specificity">
    <text evidence="4 6 7 9 10 12 15 23 24">Expressed in the fallopian tube, vascular smooth muscle cells in kidney, breast and colon and in visceral smooth muscle of the gastrointestinal tract. Highly expressed in retinal pigment epithelia. Expressed in medulloblastoma. In the kidney, constitutively expressed in parietal epithelial cells of Bowman's capsule, tubular epithelial cells and in arterial endothelial cells (at protein level). Highly expressed in the platelets, prostate, testis and uterus. Higher expression is observed in uterine leiomyomata. Weaker expression in the spleen, thymus, heart, pancreas, liver, ovary cells and small intestine, and negligible expression in the colon and peripheral blood leukocytes.</text>
</comment>
<comment type="developmental stage">
    <text evidence="14">In the fetal kidney, detected in the developing mesangium, ureteric bud epithelium and the undifferentiated mesenchyme (at protein level).</text>
</comment>
<comment type="induction">
    <text evidence="8 14 16 21">Up-regulated by EWS-FLI1 chimeric transcription factor in tumor derived cells. Up-regulated in podocytes and interstitial cells after injury/activation of these cells. FGF2 activates PDGFC transcription via EGR1. Up-regulated by TGFB1 in concert with FGF2.</text>
</comment>
<comment type="PTM">
    <text>Proteolytic removal of the N-terminal CUB domain releasing the core domain is necessary for unmasking the receptor-binding epitopes of the core domain. Cleavage after basic residues in the hinge region (region connecting the CUB and growth factor domains) gives rise to the receptor-binding form. Cleaved by PLAT and PLG.</text>
</comment>
<comment type="PTM">
    <text evidence="22">Sumoylated with SUMO1.</text>
</comment>
<comment type="PTM">
    <text evidence="10">N-glycosylated.</text>
</comment>
<comment type="miscellaneous">
    <text>A lower molecular weight form (around 43 kDa) is present in patients with papillary thyroid carcinoma.</text>
</comment>
<comment type="similarity">
    <text evidence="27">Belongs to the PDGF/VEGF growth factor family.</text>
</comment>
<sequence>MSLFGLLLLTSALAGQRQGTQAESNLSSKFQFSSNKEQNGVQDPQHERIITVSTNGSIHSPRFPHTYPRNTVLVWRLVAVEENVWIQLTFDERFGLEDPEDDICKYDFVEVEEPSDGTILGRWCGSGTVPGKQISKGNQIRIRFVSDEYFPSEPGFCIHYNIVMPQFTEAVSPSVLPPSALPLDLLNNAITAFSTLEDLIRYLEPERWQLDLEDLYRPTWQLLGKAFVFGRKSRVVDLNLLTEEVRLYSCTPRNFSVSIREELKRTDTIFWPGCLLVKRCGGNCACCLHNCNECQCVPSKVTKKYHEVLQLRPKTGVRGLHKSLTDVALEHHEECDCVCRGSTGG</sequence>
<organism>
    <name type="scientific">Homo sapiens</name>
    <name type="common">Human</name>
    <dbReference type="NCBI Taxonomy" id="9606"/>
    <lineage>
        <taxon>Eukaryota</taxon>
        <taxon>Metazoa</taxon>
        <taxon>Chordata</taxon>
        <taxon>Craniata</taxon>
        <taxon>Vertebrata</taxon>
        <taxon>Euteleostomi</taxon>
        <taxon>Mammalia</taxon>
        <taxon>Eutheria</taxon>
        <taxon>Euarchontoglires</taxon>
        <taxon>Primates</taxon>
        <taxon>Haplorrhini</taxon>
        <taxon>Catarrhini</taxon>
        <taxon>Hominidae</taxon>
        <taxon>Homo</taxon>
    </lineage>
</organism>
<accession>Q9NRA1</accession>
<accession>B4DU34</accession>
<accession>B9EGR8</accession>
<accession>Q4W5M9</accession>
<accession>Q9UL22</accession>